<feature type="chain" id="PRO_1000006680" description="Aspartate--tRNA(Asp/Asn) ligase">
    <location>
        <begin position="1"/>
        <end position="590"/>
    </location>
</feature>
<feature type="region of interest" description="Aspartate" evidence="1">
    <location>
        <begin position="196"/>
        <end position="199"/>
    </location>
</feature>
<feature type="binding site" evidence="1">
    <location>
        <position position="172"/>
    </location>
    <ligand>
        <name>L-aspartate</name>
        <dbReference type="ChEBI" id="CHEBI:29991"/>
    </ligand>
</feature>
<feature type="binding site" evidence="1">
    <location>
        <begin position="218"/>
        <end position="220"/>
    </location>
    <ligand>
        <name>ATP</name>
        <dbReference type="ChEBI" id="CHEBI:30616"/>
    </ligand>
</feature>
<feature type="binding site" evidence="1">
    <location>
        <position position="218"/>
    </location>
    <ligand>
        <name>L-aspartate</name>
        <dbReference type="ChEBI" id="CHEBI:29991"/>
    </ligand>
</feature>
<feature type="binding site" evidence="1">
    <location>
        <position position="227"/>
    </location>
    <ligand>
        <name>ATP</name>
        <dbReference type="ChEBI" id="CHEBI:30616"/>
    </ligand>
</feature>
<feature type="binding site" evidence="1">
    <location>
        <position position="449"/>
    </location>
    <ligand>
        <name>L-aspartate</name>
        <dbReference type="ChEBI" id="CHEBI:29991"/>
    </ligand>
</feature>
<feature type="binding site" evidence="1">
    <location>
        <position position="484"/>
    </location>
    <ligand>
        <name>ATP</name>
        <dbReference type="ChEBI" id="CHEBI:30616"/>
    </ligand>
</feature>
<feature type="binding site" evidence="1">
    <location>
        <position position="491"/>
    </location>
    <ligand>
        <name>L-aspartate</name>
        <dbReference type="ChEBI" id="CHEBI:29991"/>
    </ligand>
</feature>
<feature type="binding site" evidence="1">
    <location>
        <begin position="536"/>
        <end position="539"/>
    </location>
    <ligand>
        <name>ATP</name>
        <dbReference type="ChEBI" id="CHEBI:30616"/>
    </ligand>
</feature>
<feature type="site" description="Important for tRNA non-discrimination" evidence="1">
    <location>
        <position position="30"/>
    </location>
</feature>
<feature type="site" description="Important for tRNA non-discrimination" evidence="1">
    <location>
        <position position="80"/>
    </location>
</feature>
<accession>A4J0C7</accession>
<proteinExistence type="inferred from homology"/>
<organism>
    <name type="scientific">Francisella tularensis subsp. tularensis (strain WY96-3418)</name>
    <dbReference type="NCBI Taxonomy" id="418136"/>
    <lineage>
        <taxon>Bacteria</taxon>
        <taxon>Pseudomonadati</taxon>
        <taxon>Pseudomonadota</taxon>
        <taxon>Gammaproteobacteria</taxon>
        <taxon>Thiotrichales</taxon>
        <taxon>Francisellaceae</taxon>
        <taxon>Francisella</taxon>
    </lineage>
</organism>
<gene>
    <name evidence="1" type="primary">aspS</name>
    <name type="ordered locus">FTW_1997</name>
</gene>
<name>SYDND_FRATW</name>
<keyword id="KW-0030">Aminoacyl-tRNA synthetase</keyword>
<keyword id="KW-0067">ATP-binding</keyword>
<keyword id="KW-0963">Cytoplasm</keyword>
<keyword id="KW-0436">Ligase</keyword>
<keyword id="KW-0547">Nucleotide-binding</keyword>
<keyword id="KW-0648">Protein biosynthesis</keyword>
<protein>
    <recommendedName>
        <fullName evidence="1">Aspartate--tRNA(Asp/Asn) ligase</fullName>
        <ecNumber evidence="1">6.1.1.23</ecNumber>
    </recommendedName>
    <alternativeName>
        <fullName evidence="1">Aspartyl-tRNA synthetase</fullName>
        <shortName evidence="1">AspRS</shortName>
    </alternativeName>
    <alternativeName>
        <fullName evidence="1">Non-discriminating aspartyl-tRNA synthetase</fullName>
        <shortName evidence="1">ND-AspRS</shortName>
    </alternativeName>
</protein>
<comment type="function">
    <text evidence="1">Aspartyl-tRNA synthetase with relaxed tRNA specificity since it is able to aspartylate not only its cognate tRNA(Asp) but also tRNA(Asn). Reaction proceeds in two steps: L-aspartate is first activated by ATP to form Asp-AMP and then transferred to the acceptor end of tRNA(Asp/Asn).</text>
</comment>
<comment type="catalytic activity">
    <reaction evidence="1">
        <text>tRNA(Asx) + L-aspartate + ATP = L-aspartyl-tRNA(Asx) + AMP + diphosphate</text>
        <dbReference type="Rhea" id="RHEA:18349"/>
        <dbReference type="Rhea" id="RHEA-COMP:9710"/>
        <dbReference type="Rhea" id="RHEA-COMP:9711"/>
        <dbReference type="ChEBI" id="CHEBI:29991"/>
        <dbReference type="ChEBI" id="CHEBI:30616"/>
        <dbReference type="ChEBI" id="CHEBI:33019"/>
        <dbReference type="ChEBI" id="CHEBI:78442"/>
        <dbReference type="ChEBI" id="CHEBI:78516"/>
        <dbReference type="ChEBI" id="CHEBI:456215"/>
        <dbReference type="EC" id="6.1.1.23"/>
    </reaction>
</comment>
<comment type="subunit">
    <text evidence="1">Homodimer.</text>
</comment>
<comment type="subcellular location">
    <subcellularLocation>
        <location evidence="1">Cytoplasm</location>
    </subcellularLocation>
</comment>
<comment type="similarity">
    <text evidence="1">Belongs to the class-II aminoacyl-tRNA synthetase family. Type 1 subfamily.</text>
</comment>
<sequence length="590" mass="66727">MRTHYSSDINEKLQGQKVTVCGWVHRRRDHGGVIFLDIRDRTGLVQLVFNPDNDNFKVADSLRSEFVIKAEGVVNLRPEGQENKNISSGKVEIIGDSIEVINKSKTIPFQLDDFQSTGEDVKLKYRYIDLRRPEMQHKLITRSKAIRYVRNFLDNNGFLDIETPFLTKATPEGARDYLVPSRNFNGKFYALPQSPQLFKQLLMVSGFDRYYQIVKCFRDEDLRADRQPEFTQIDIEASFIDEAFIMSTMERMIAGLFKETIGVEFATPFQVMTFADAIDKYGSDKPDLRIPLEFVNIKEDMQNEEFKVFSGPANDPQSRVIALRIPGGNDKLTRKMIDEYTKFVGIYGAKGLAYIKINSLSQGKEGLQSPIVKNISEETLFKVIEKTSAKEGDLLFFGAGKAKIVNDSMGALRAKIGEDLDLFNKDWAPLWVVDFPMFEKDDNRLYAMHHPFTAPKVSSVEDLVNTNPEELSSRAYDMVINGYEVGGGSIRIHKQDIQAKVFNLLGISDDEAREKFGFMLDALSYGTPIHGGIAFGVDRLIMLLTGTTNIRDVIAFPKTQTASCLMTEAPSTVSLEQLNELGIAVKKEER</sequence>
<evidence type="ECO:0000255" key="1">
    <source>
        <dbReference type="HAMAP-Rule" id="MF_00044"/>
    </source>
</evidence>
<reference key="1">
    <citation type="journal article" date="2007" name="PLoS ONE">
        <title>Complete genomic characterization of a pathogenic A.II strain of Francisella tularensis subspecies tularensis.</title>
        <authorList>
            <person name="Beckstrom-Sternberg S.M."/>
            <person name="Auerbach R.K."/>
            <person name="Godbole S."/>
            <person name="Pearson J.V."/>
            <person name="Beckstrom-Sternberg J.S."/>
            <person name="Deng Z."/>
            <person name="Munk C."/>
            <person name="Kubota K."/>
            <person name="Zhou Y."/>
            <person name="Bruce D."/>
            <person name="Noronha J."/>
            <person name="Scheuermann R.H."/>
            <person name="Wang A."/>
            <person name="Wei X."/>
            <person name="Wang J."/>
            <person name="Hao J."/>
            <person name="Wagner D.M."/>
            <person name="Brettin T.S."/>
            <person name="Brown N."/>
            <person name="Gilna P."/>
            <person name="Keim P.S."/>
        </authorList>
    </citation>
    <scope>NUCLEOTIDE SEQUENCE [LARGE SCALE GENOMIC DNA]</scope>
    <source>
        <strain>WY96-3418</strain>
    </source>
</reference>
<dbReference type="EC" id="6.1.1.23" evidence="1"/>
<dbReference type="EMBL" id="CP000608">
    <property type="protein sequence ID" value="ABO47629.1"/>
    <property type="molecule type" value="Genomic_DNA"/>
</dbReference>
<dbReference type="RefSeq" id="WP_003027596.1">
    <property type="nucleotide sequence ID" value="NC_009257.1"/>
</dbReference>
<dbReference type="SMR" id="A4J0C7"/>
<dbReference type="KEGG" id="ftw:FTW_1997"/>
<dbReference type="HOGENOM" id="CLU_014330_3_2_6"/>
<dbReference type="GO" id="GO:0005737">
    <property type="term" value="C:cytoplasm"/>
    <property type="evidence" value="ECO:0007669"/>
    <property type="project" value="UniProtKB-SubCell"/>
</dbReference>
<dbReference type="GO" id="GO:0004815">
    <property type="term" value="F:aspartate-tRNA ligase activity"/>
    <property type="evidence" value="ECO:0007669"/>
    <property type="project" value="UniProtKB-UniRule"/>
</dbReference>
<dbReference type="GO" id="GO:0050560">
    <property type="term" value="F:aspartate-tRNA(Asn) ligase activity"/>
    <property type="evidence" value="ECO:0007669"/>
    <property type="project" value="UniProtKB-EC"/>
</dbReference>
<dbReference type="GO" id="GO:0005524">
    <property type="term" value="F:ATP binding"/>
    <property type="evidence" value="ECO:0007669"/>
    <property type="project" value="UniProtKB-UniRule"/>
</dbReference>
<dbReference type="GO" id="GO:0003676">
    <property type="term" value="F:nucleic acid binding"/>
    <property type="evidence" value="ECO:0007669"/>
    <property type="project" value="InterPro"/>
</dbReference>
<dbReference type="GO" id="GO:0006422">
    <property type="term" value="P:aspartyl-tRNA aminoacylation"/>
    <property type="evidence" value="ECO:0007669"/>
    <property type="project" value="UniProtKB-UniRule"/>
</dbReference>
<dbReference type="CDD" id="cd00777">
    <property type="entry name" value="AspRS_core"/>
    <property type="match status" value="1"/>
</dbReference>
<dbReference type="CDD" id="cd04317">
    <property type="entry name" value="EcAspRS_like_N"/>
    <property type="match status" value="1"/>
</dbReference>
<dbReference type="Gene3D" id="3.30.930.10">
    <property type="entry name" value="Bira Bifunctional Protein, Domain 2"/>
    <property type="match status" value="1"/>
</dbReference>
<dbReference type="Gene3D" id="3.30.1360.30">
    <property type="entry name" value="GAD-like domain"/>
    <property type="match status" value="1"/>
</dbReference>
<dbReference type="Gene3D" id="2.40.50.140">
    <property type="entry name" value="Nucleic acid-binding proteins"/>
    <property type="match status" value="1"/>
</dbReference>
<dbReference type="HAMAP" id="MF_00044">
    <property type="entry name" value="Asp_tRNA_synth_type1"/>
    <property type="match status" value="1"/>
</dbReference>
<dbReference type="InterPro" id="IPR004364">
    <property type="entry name" value="Aa-tRNA-synt_II"/>
</dbReference>
<dbReference type="InterPro" id="IPR006195">
    <property type="entry name" value="aa-tRNA-synth_II"/>
</dbReference>
<dbReference type="InterPro" id="IPR045864">
    <property type="entry name" value="aa-tRNA-synth_II/BPL/LPL"/>
</dbReference>
<dbReference type="InterPro" id="IPR004524">
    <property type="entry name" value="Asp-tRNA-ligase_1"/>
</dbReference>
<dbReference type="InterPro" id="IPR047089">
    <property type="entry name" value="Asp-tRNA-ligase_1_N"/>
</dbReference>
<dbReference type="InterPro" id="IPR002312">
    <property type="entry name" value="Asp/Asn-tRNA-synth_IIb"/>
</dbReference>
<dbReference type="InterPro" id="IPR047090">
    <property type="entry name" value="AspRS_core"/>
</dbReference>
<dbReference type="InterPro" id="IPR004115">
    <property type="entry name" value="GAD-like_sf"/>
</dbReference>
<dbReference type="InterPro" id="IPR029351">
    <property type="entry name" value="GAD_dom"/>
</dbReference>
<dbReference type="InterPro" id="IPR012340">
    <property type="entry name" value="NA-bd_OB-fold"/>
</dbReference>
<dbReference type="InterPro" id="IPR004365">
    <property type="entry name" value="NA-bd_OB_tRNA"/>
</dbReference>
<dbReference type="NCBIfam" id="TIGR00459">
    <property type="entry name" value="aspS_bact"/>
    <property type="match status" value="1"/>
</dbReference>
<dbReference type="NCBIfam" id="NF001750">
    <property type="entry name" value="PRK00476.1"/>
    <property type="match status" value="1"/>
</dbReference>
<dbReference type="PANTHER" id="PTHR22594:SF5">
    <property type="entry name" value="ASPARTATE--TRNA LIGASE, MITOCHONDRIAL"/>
    <property type="match status" value="1"/>
</dbReference>
<dbReference type="PANTHER" id="PTHR22594">
    <property type="entry name" value="ASPARTYL/LYSYL-TRNA SYNTHETASE"/>
    <property type="match status" value="1"/>
</dbReference>
<dbReference type="Pfam" id="PF02938">
    <property type="entry name" value="GAD"/>
    <property type="match status" value="1"/>
</dbReference>
<dbReference type="Pfam" id="PF00152">
    <property type="entry name" value="tRNA-synt_2"/>
    <property type="match status" value="1"/>
</dbReference>
<dbReference type="Pfam" id="PF01336">
    <property type="entry name" value="tRNA_anti-codon"/>
    <property type="match status" value="1"/>
</dbReference>
<dbReference type="PRINTS" id="PR01042">
    <property type="entry name" value="TRNASYNTHASP"/>
</dbReference>
<dbReference type="SUPFAM" id="SSF55681">
    <property type="entry name" value="Class II aaRS and biotin synthetases"/>
    <property type="match status" value="1"/>
</dbReference>
<dbReference type="SUPFAM" id="SSF55261">
    <property type="entry name" value="GAD domain-like"/>
    <property type="match status" value="1"/>
</dbReference>
<dbReference type="SUPFAM" id="SSF50249">
    <property type="entry name" value="Nucleic acid-binding proteins"/>
    <property type="match status" value="1"/>
</dbReference>
<dbReference type="PROSITE" id="PS50862">
    <property type="entry name" value="AA_TRNA_LIGASE_II"/>
    <property type="match status" value="1"/>
</dbReference>